<protein>
    <recommendedName>
        <fullName evidence="5">Large ribosomal subunit protein eL29</fullName>
    </recommendedName>
    <alternativeName>
        <fullName>60S ribosomal protein L29</fullName>
    </alternativeName>
    <alternativeName>
        <fullName>L43</fullName>
    </alternativeName>
</protein>
<feature type="initiator methionine" description="Removed" evidence="1">
    <location>
        <position position="1"/>
    </location>
</feature>
<feature type="chain" id="PRO_0000219140" description="Large ribosomal subunit protein eL29">
    <location>
        <begin position="2"/>
        <end position="61"/>
    </location>
</feature>
<feature type="region of interest" description="Disordered" evidence="3">
    <location>
        <begin position="1"/>
        <end position="32"/>
    </location>
</feature>
<feature type="compositionally biased region" description="Basic residues" evidence="3">
    <location>
        <begin position="1"/>
        <end position="26"/>
    </location>
</feature>
<sequence>MAKSKNHTNHNQNKKAHRNGIKRPQKHRYDSLKYRDAKFRRNQKFANRGTVEAIRQAKASA</sequence>
<evidence type="ECO:0000250" key="1"/>
<evidence type="ECO:0000250" key="2">
    <source>
        <dbReference type="UniProtKB" id="P05747"/>
    </source>
</evidence>
<evidence type="ECO:0000256" key="3">
    <source>
        <dbReference type="SAM" id="MobiDB-lite"/>
    </source>
</evidence>
<evidence type="ECO:0000269" key="4">
    <source>
    </source>
</evidence>
<evidence type="ECO:0000305" key="5"/>
<reference key="1">
    <citation type="journal article" date="2002" name="Nature">
        <title>The genome sequence of Schizosaccharomyces pombe.</title>
        <authorList>
            <person name="Wood V."/>
            <person name="Gwilliam R."/>
            <person name="Rajandream M.A."/>
            <person name="Lyne M.H."/>
            <person name="Lyne R."/>
            <person name="Stewart A."/>
            <person name="Sgouros J.G."/>
            <person name="Peat N."/>
            <person name="Hayles J."/>
            <person name="Baker S.G."/>
            <person name="Basham D."/>
            <person name="Bowman S."/>
            <person name="Brooks K."/>
            <person name="Brown D."/>
            <person name="Brown S."/>
            <person name="Chillingworth T."/>
            <person name="Churcher C.M."/>
            <person name="Collins M."/>
            <person name="Connor R."/>
            <person name="Cronin A."/>
            <person name="Davis P."/>
            <person name="Feltwell T."/>
            <person name="Fraser A."/>
            <person name="Gentles S."/>
            <person name="Goble A."/>
            <person name="Hamlin N."/>
            <person name="Harris D.E."/>
            <person name="Hidalgo J."/>
            <person name="Hodgson G."/>
            <person name="Holroyd S."/>
            <person name="Hornsby T."/>
            <person name="Howarth S."/>
            <person name="Huckle E.J."/>
            <person name="Hunt S."/>
            <person name="Jagels K."/>
            <person name="James K.D."/>
            <person name="Jones L."/>
            <person name="Jones M."/>
            <person name="Leather S."/>
            <person name="McDonald S."/>
            <person name="McLean J."/>
            <person name="Mooney P."/>
            <person name="Moule S."/>
            <person name="Mungall K.L."/>
            <person name="Murphy L.D."/>
            <person name="Niblett D."/>
            <person name="Odell C."/>
            <person name="Oliver K."/>
            <person name="O'Neil S."/>
            <person name="Pearson D."/>
            <person name="Quail M.A."/>
            <person name="Rabbinowitsch E."/>
            <person name="Rutherford K.M."/>
            <person name="Rutter S."/>
            <person name="Saunders D."/>
            <person name="Seeger K."/>
            <person name="Sharp S."/>
            <person name="Skelton J."/>
            <person name="Simmonds M.N."/>
            <person name="Squares R."/>
            <person name="Squares S."/>
            <person name="Stevens K."/>
            <person name="Taylor K."/>
            <person name="Taylor R.G."/>
            <person name="Tivey A."/>
            <person name="Walsh S.V."/>
            <person name="Warren T."/>
            <person name="Whitehead S."/>
            <person name="Woodward J.R."/>
            <person name="Volckaert G."/>
            <person name="Aert R."/>
            <person name="Robben J."/>
            <person name="Grymonprez B."/>
            <person name="Weltjens I."/>
            <person name="Vanstreels E."/>
            <person name="Rieger M."/>
            <person name="Schaefer M."/>
            <person name="Mueller-Auer S."/>
            <person name="Gabel C."/>
            <person name="Fuchs M."/>
            <person name="Duesterhoeft A."/>
            <person name="Fritzc C."/>
            <person name="Holzer E."/>
            <person name="Moestl D."/>
            <person name="Hilbert H."/>
            <person name="Borzym K."/>
            <person name="Langer I."/>
            <person name="Beck A."/>
            <person name="Lehrach H."/>
            <person name="Reinhardt R."/>
            <person name="Pohl T.M."/>
            <person name="Eger P."/>
            <person name="Zimmermann W."/>
            <person name="Wedler H."/>
            <person name="Wambutt R."/>
            <person name="Purnelle B."/>
            <person name="Goffeau A."/>
            <person name="Cadieu E."/>
            <person name="Dreano S."/>
            <person name="Gloux S."/>
            <person name="Lelaure V."/>
            <person name="Mottier S."/>
            <person name="Galibert F."/>
            <person name="Aves S.J."/>
            <person name="Xiang Z."/>
            <person name="Hunt C."/>
            <person name="Moore K."/>
            <person name="Hurst S.M."/>
            <person name="Lucas M."/>
            <person name="Rochet M."/>
            <person name="Gaillardin C."/>
            <person name="Tallada V.A."/>
            <person name="Garzon A."/>
            <person name="Thode G."/>
            <person name="Daga R.R."/>
            <person name="Cruzado L."/>
            <person name="Jimenez J."/>
            <person name="Sanchez M."/>
            <person name="del Rey F."/>
            <person name="Benito J."/>
            <person name="Dominguez A."/>
            <person name="Revuelta J.L."/>
            <person name="Moreno S."/>
            <person name="Armstrong J."/>
            <person name="Forsburg S.L."/>
            <person name="Cerutti L."/>
            <person name="Lowe T."/>
            <person name="McCombie W.R."/>
            <person name="Paulsen I."/>
            <person name="Potashkin J."/>
            <person name="Shpakovski G.V."/>
            <person name="Ussery D."/>
            <person name="Barrell B.G."/>
            <person name="Nurse P."/>
        </authorList>
    </citation>
    <scope>NUCLEOTIDE SEQUENCE [LARGE SCALE GENOMIC DNA]</scope>
    <source>
        <strain>972 / ATCC 24843</strain>
    </source>
</reference>
<reference key="2">
    <citation type="submission" date="1996-09" db="EMBL/GenBank/DDBJ databases">
        <title>S.pombe ribosomal protein L43 homolog.</title>
        <authorList>
            <person name="Kawamukai M."/>
        </authorList>
    </citation>
    <scope>NUCLEOTIDE SEQUENCE [MRNA] OF 4-61</scope>
</reference>
<reference key="3">
    <citation type="journal article" date="2006" name="Nat. Biotechnol.">
        <title>ORFeome cloning and global analysis of protein localization in the fission yeast Schizosaccharomyces pombe.</title>
        <authorList>
            <person name="Matsuyama A."/>
            <person name="Arai R."/>
            <person name="Yashiroda Y."/>
            <person name="Shirai A."/>
            <person name="Kamata A."/>
            <person name="Sekido S."/>
            <person name="Kobayashi Y."/>
            <person name="Hashimoto A."/>
            <person name="Hamamoto M."/>
            <person name="Hiraoka Y."/>
            <person name="Horinouchi S."/>
            <person name="Yoshida M."/>
        </authorList>
    </citation>
    <scope>SUBCELLULAR LOCATION [LARGE SCALE ANALYSIS]</scope>
</reference>
<comment type="function">
    <text evidence="2">Component of the ribosome, a large ribonucleoprotein complex responsible for the synthesis of proteins in the cell. The small ribosomal subunit (SSU) binds messenger RNAs (mRNAs) and translates the encoded message by selecting cognate aminoacyl-transfer RNA (tRNA) molecules. The large subunit (LSU) contains the ribosomal catalytic site termed the peptidyl transferase center (PTC), which catalyzes the formation of peptide bonds, thereby polymerizing the amino acids delivered by tRNAs into a polypeptide chain. The nascent polypeptides leave the ribosome through a tunnel in the LSU and interact with protein factors that function in enzymatic processing, targeting, and the membrane insertion of nascent chains at the exit of the ribosomal tunnel.</text>
</comment>
<comment type="subunit">
    <text evidence="2">Component of the large ribosomal subunit (LSU). Mature yeast ribosomes consist of a small (40S) and a large (60S) subunit. The 40S small subunit contains 1 molecule of ribosomal RNA (18S rRNA) and at least 33 different proteins. The large 60S subunit contains 3 rRNA molecules (25S, 5.8S and 5S rRNA) and at least 46 different proteins.</text>
</comment>
<comment type="subcellular location">
    <subcellularLocation>
        <location evidence="4">Cytoplasm</location>
    </subcellularLocation>
    <subcellularLocation>
        <location evidence="4">Nucleus</location>
        <location evidence="4">Nucleolus</location>
    </subcellularLocation>
</comment>
<comment type="similarity">
    <text evidence="5">Belongs to the eukaryotic ribosomal protein eL29 family.</text>
</comment>
<accession>Q92366</accession>
<keyword id="KW-0002">3D-structure</keyword>
<keyword id="KW-0963">Cytoplasm</keyword>
<keyword id="KW-0539">Nucleus</keyword>
<keyword id="KW-1185">Reference proteome</keyword>
<keyword id="KW-0687">Ribonucleoprotein</keyword>
<keyword id="KW-0689">Ribosomal protein</keyword>
<gene>
    <name type="primary">rpl29</name>
    <name type="ORF">SPBC776.01</name>
</gene>
<dbReference type="EMBL" id="CU329671">
    <property type="protein sequence ID" value="CAA22874.1"/>
    <property type="molecule type" value="Genomic_DNA"/>
</dbReference>
<dbReference type="EMBL" id="D87869">
    <property type="protein sequence ID" value="BAA13485.1"/>
    <property type="molecule type" value="mRNA"/>
</dbReference>
<dbReference type="PIR" id="T40671">
    <property type="entry name" value="T40671"/>
</dbReference>
<dbReference type="PIR" id="T43241">
    <property type="entry name" value="T43241"/>
</dbReference>
<dbReference type="RefSeq" id="NP_596316.1">
    <property type="nucleotide sequence ID" value="NM_001022238.2"/>
</dbReference>
<dbReference type="PDB" id="8EUG">
    <property type="method" value="EM"/>
    <property type="resolution" value="2.80 A"/>
    <property type="chains" value="b=1-61"/>
</dbReference>
<dbReference type="PDB" id="8EUI">
    <property type="method" value="EM"/>
    <property type="resolution" value="3.10 A"/>
    <property type="chains" value="b=1-61"/>
</dbReference>
<dbReference type="PDB" id="9AXT">
    <property type="method" value="EM"/>
    <property type="resolution" value="2.40 A"/>
    <property type="chains" value="Bn=1-61"/>
</dbReference>
<dbReference type="PDB" id="9AXU">
    <property type="method" value="EM"/>
    <property type="resolution" value="1.94 A"/>
    <property type="chains" value="n=1-61"/>
</dbReference>
<dbReference type="PDB" id="9AXV">
    <property type="method" value="EM"/>
    <property type="resolution" value="2.40 A"/>
    <property type="chains" value="Bn=1-61"/>
</dbReference>
<dbReference type="PDBsum" id="8EUG"/>
<dbReference type="PDBsum" id="8EUI"/>
<dbReference type="PDBsum" id="9AXT"/>
<dbReference type="PDBsum" id="9AXU"/>
<dbReference type="PDBsum" id="9AXV"/>
<dbReference type="EMDB" id="EMD-43972"/>
<dbReference type="EMDB" id="EMD-43973"/>
<dbReference type="EMDB" id="EMD-43976"/>
<dbReference type="SMR" id="Q92366"/>
<dbReference type="BioGRID" id="277686">
    <property type="interactions" value="8"/>
</dbReference>
<dbReference type="FunCoup" id="Q92366">
    <property type="interactions" value="343"/>
</dbReference>
<dbReference type="IntAct" id="Q92366">
    <property type="interactions" value="2"/>
</dbReference>
<dbReference type="MINT" id="Q92366"/>
<dbReference type="STRING" id="284812.Q92366"/>
<dbReference type="iPTMnet" id="Q92366"/>
<dbReference type="PaxDb" id="4896-SPBC776.01.1"/>
<dbReference type="EnsemblFungi" id="SPBC776.01.1">
    <property type="protein sequence ID" value="SPBC776.01.1:pep"/>
    <property type="gene ID" value="SPBC776.01"/>
</dbReference>
<dbReference type="GeneID" id="2541172"/>
<dbReference type="KEGG" id="spo:2541172"/>
<dbReference type="PomBase" id="SPBC776.01">
    <property type="gene designation" value="rpl29"/>
</dbReference>
<dbReference type="VEuPathDB" id="FungiDB:SPBC776.01"/>
<dbReference type="eggNOG" id="KOG3504">
    <property type="taxonomic scope" value="Eukaryota"/>
</dbReference>
<dbReference type="HOGENOM" id="CLU_169255_2_0_1"/>
<dbReference type="InParanoid" id="Q92366"/>
<dbReference type="OMA" id="PRTNKYP"/>
<dbReference type="PhylomeDB" id="Q92366"/>
<dbReference type="Reactome" id="R-SPO-156827">
    <property type="pathway name" value="L13a-mediated translational silencing of Ceruloplasmin expression"/>
</dbReference>
<dbReference type="Reactome" id="R-SPO-1799339">
    <property type="pathway name" value="SRP-dependent cotranslational protein targeting to membrane"/>
</dbReference>
<dbReference type="Reactome" id="R-SPO-72689">
    <property type="pathway name" value="Formation of a pool of free 40S subunits"/>
</dbReference>
<dbReference type="Reactome" id="R-SPO-72706">
    <property type="pathway name" value="GTP hydrolysis and joining of the 60S ribosomal subunit"/>
</dbReference>
<dbReference type="Reactome" id="R-SPO-975956">
    <property type="pathway name" value="Nonsense Mediated Decay (NMD) independent of the Exon Junction Complex (EJC)"/>
</dbReference>
<dbReference type="Reactome" id="R-SPO-975957">
    <property type="pathway name" value="Nonsense Mediated Decay (NMD) enhanced by the Exon Junction Complex (EJC)"/>
</dbReference>
<dbReference type="PRO" id="PR:Q92366"/>
<dbReference type="Proteomes" id="UP000002485">
    <property type="component" value="Chromosome II"/>
</dbReference>
<dbReference type="GO" id="GO:0005829">
    <property type="term" value="C:cytosol"/>
    <property type="evidence" value="ECO:0007005"/>
    <property type="project" value="PomBase"/>
</dbReference>
<dbReference type="GO" id="GO:0022625">
    <property type="term" value="C:cytosolic large ribosomal subunit"/>
    <property type="evidence" value="ECO:0000269"/>
    <property type="project" value="PomBase"/>
</dbReference>
<dbReference type="GO" id="GO:0005730">
    <property type="term" value="C:nucleolus"/>
    <property type="evidence" value="ECO:0007005"/>
    <property type="project" value="PomBase"/>
</dbReference>
<dbReference type="GO" id="GO:0003735">
    <property type="term" value="F:structural constituent of ribosome"/>
    <property type="evidence" value="ECO:0000318"/>
    <property type="project" value="GO_Central"/>
</dbReference>
<dbReference type="GO" id="GO:0002181">
    <property type="term" value="P:cytoplasmic translation"/>
    <property type="evidence" value="ECO:0000318"/>
    <property type="project" value="GO_Central"/>
</dbReference>
<dbReference type="Gene3D" id="6.10.140.1730">
    <property type="match status" value="1"/>
</dbReference>
<dbReference type="InterPro" id="IPR002673">
    <property type="entry name" value="Ribosomal_eL29"/>
</dbReference>
<dbReference type="PANTHER" id="PTHR12884">
    <property type="entry name" value="60S RIBOSOMAL PROTEIN L29"/>
    <property type="match status" value="1"/>
</dbReference>
<dbReference type="PANTHER" id="PTHR12884:SF0">
    <property type="entry name" value="60S RIBOSOMAL PROTEIN L29"/>
    <property type="match status" value="1"/>
</dbReference>
<dbReference type="Pfam" id="PF01779">
    <property type="entry name" value="Ribosomal_L29e"/>
    <property type="match status" value="1"/>
</dbReference>
<organism>
    <name type="scientific">Schizosaccharomyces pombe (strain 972 / ATCC 24843)</name>
    <name type="common">Fission yeast</name>
    <dbReference type="NCBI Taxonomy" id="284812"/>
    <lineage>
        <taxon>Eukaryota</taxon>
        <taxon>Fungi</taxon>
        <taxon>Dikarya</taxon>
        <taxon>Ascomycota</taxon>
        <taxon>Taphrinomycotina</taxon>
        <taxon>Schizosaccharomycetes</taxon>
        <taxon>Schizosaccharomycetales</taxon>
        <taxon>Schizosaccharomycetaceae</taxon>
        <taxon>Schizosaccharomyces</taxon>
    </lineage>
</organism>
<name>RL29_SCHPO</name>
<proteinExistence type="evidence at protein level"/>